<protein>
    <recommendedName>
        <fullName evidence="1">Peptide chain release factor 1</fullName>
        <shortName evidence="1">RF-1</shortName>
    </recommendedName>
</protein>
<comment type="function">
    <text evidence="1">Peptide chain release factor 1 directs the termination of translation in response to the peptide chain termination codons UAG and UAA.</text>
</comment>
<comment type="subcellular location">
    <subcellularLocation>
        <location evidence="1">Cytoplasm</location>
    </subcellularLocation>
</comment>
<comment type="PTM">
    <text evidence="1">Methylated by PrmC. Methylation increases the termination efficiency of RF1.</text>
</comment>
<comment type="similarity">
    <text evidence="1">Belongs to the prokaryotic/mitochondrial release factor family.</text>
</comment>
<dbReference type="EMBL" id="CP000393">
    <property type="protein sequence ID" value="ABG52137.1"/>
    <property type="molecule type" value="Genomic_DNA"/>
</dbReference>
<dbReference type="RefSeq" id="WP_011612493.1">
    <property type="nucleotide sequence ID" value="NC_008312.1"/>
</dbReference>
<dbReference type="SMR" id="Q110D7"/>
<dbReference type="STRING" id="203124.Tery_2982"/>
<dbReference type="KEGG" id="ter:Tery_2982"/>
<dbReference type="eggNOG" id="COG0216">
    <property type="taxonomic scope" value="Bacteria"/>
</dbReference>
<dbReference type="HOGENOM" id="CLU_036856_0_1_3"/>
<dbReference type="OrthoDB" id="9806673at2"/>
<dbReference type="GO" id="GO:0005737">
    <property type="term" value="C:cytoplasm"/>
    <property type="evidence" value="ECO:0007669"/>
    <property type="project" value="UniProtKB-SubCell"/>
</dbReference>
<dbReference type="GO" id="GO:0016149">
    <property type="term" value="F:translation release factor activity, codon specific"/>
    <property type="evidence" value="ECO:0007669"/>
    <property type="project" value="UniProtKB-UniRule"/>
</dbReference>
<dbReference type="FunFam" id="3.30.160.20:FF:000004">
    <property type="entry name" value="Peptide chain release factor 1"/>
    <property type="match status" value="1"/>
</dbReference>
<dbReference type="FunFam" id="3.30.70.1660:FF:000002">
    <property type="entry name" value="Peptide chain release factor 1"/>
    <property type="match status" value="1"/>
</dbReference>
<dbReference type="FunFam" id="3.30.70.1660:FF:000014">
    <property type="entry name" value="Peptide chain release factor 1"/>
    <property type="match status" value="1"/>
</dbReference>
<dbReference type="Gene3D" id="3.30.160.20">
    <property type="match status" value="1"/>
</dbReference>
<dbReference type="Gene3D" id="3.30.70.1660">
    <property type="match status" value="2"/>
</dbReference>
<dbReference type="Gene3D" id="6.10.140.1950">
    <property type="match status" value="1"/>
</dbReference>
<dbReference type="HAMAP" id="MF_00093">
    <property type="entry name" value="Rel_fac_1"/>
    <property type="match status" value="1"/>
</dbReference>
<dbReference type="InterPro" id="IPR005139">
    <property type="entry name" value="PCRF"/>
</dbReference>
<dbReference type="InterPro" id="IPR000352">
    <property type="entry name" value="Pep_chain_release_fac_I"/>
</dbReference>
<dbReference type="InterPro" id="IPR045853">
    <property type="entry name" value="Pep_chain_release_fac_I_sf"/>
</dbReference>
<dbReference type="InterPro" id="IPR050057">
    <property type="entry name" value="Prokaryotic/Mito_RF"/>
</dbReference>
<dbReference type="InterPro" id="IPR004373">
    <property type="entry name" value="RF-1"/>
</dbReference>
<dbReference type="NCBIfam" id="TIGR00019">
    <property type="entry name" value="prfA"/>
    <property type="match status" value="1"/>
</dbReference>
<dbReference type="NCBIfam" id="NF001859">
    <property type="entry name" value="PRK00591.1"/>
    <property type="match status" value="1"/>
</dbReference>
<dbReference type="PANTHER" id="PTHR43804">
    <property type="entry name" value="LD18447P"/>
    <property type="match status" value="1"/>
</dbReference>
<dbReference type="PANTHER" id="PTHR43804:SF8">
    <property type="entry name" value="PEPTIDE CHAIN RELEASE FACTOR APG3, CHLOROPLASTIC"/>
    <property type="match status" value="1"/>
</dbReference>
<dbReference type="Pfam" id="PF03462">
    <property type="entry name" value="PCRF"/>
    <property type="match status" value="1"/>
</dbReference>
<dbReference type="Pfam" id="PF00472">
    <property type="entry name" value="RF-1"/>
    <property type="match status" value="1"/>
</dbReference>
<dbReference type="SMART" id="SM00937">
    <property type="entry name" value="PCRF"/>
    <property type="match status" value="1"/>
</dbReference>
<dbReference type="SUPFAM" id="SSF75620">
    <property type="entry name" value="Release factor"/>
    <property type="match status" value="1"/>
</dbReference>
<dbReference type="PROSITE" id="PS00745">
    <property type="entry name" value="RF_PROK_I"/>
    <property type="match status" value="1"/>
</dbReference>
<evidence type="ECO:0000255" key="1">
    <source>
        <dbReference type="HAMAP-Rule" id="MF_00093"/>
    </source>
</evidence>
<feature type="chain" id="PRO_0000263387" description="Peptide chain release factor 1">
    <location>
        <begin position="1"/>
        <end position="369"/>
    </location>
</feature>
<feature type="modified residue" description="N5-methylglutamine" evidence="1">
    <location>
        <position position="239"/>
    </location>
</feature>
<accession>Q110D7</accession>
<proteinExistence type="inferred from homology"/>
<keyword id="KW-0963">Cytoplasm</keyword>
<keyword id="KW-0488">Methylation</keyword>
<keyword id="KW-0648">Protein biosynthesis</keyword>
<reference key="1">
    <citation type="journal article" date="2015" name="Proc. Natl. Acad. Sci. U.S.A.">
        <title>Trichodesmium genome maintains abundant, widespread noncoding DNA in situ, despite oligotrophic lifestyle.</title>
        <authorList>
            <person name="Walworth N."/>
            <person name="Pfreundt U."/>
            <person name="Nelson W.C."/>
            <person name="Mincer T."/>
            <person name="Heidelberg J.F."/>
            <person name="Fu F."/>
            <person name="Waterbury J.B."/>
            <person name="Glavina del Rio T."/>
            <person name="Goodwin L."/>
            <person name="Kyrpides N.C."/>
            <person name="Land M.L."/>
            <person name="Woyke T."/>
            <person name="Hutchins D.A."/>
            <person name="Hess W.R."/>
            <person name="Webb E.A."/>
        </authorList>
    </citation>
    <scope>NUCLEOTIDE SEQUENCE [LARGE SCALE GENOMIC DNA]</scope>
    <source>
        <strain>IMS101</strain>
    </source>
</reference>
<organism>
    <name type="scientific">Trichodesmium erythraeum (strain IMS101)</name>
    <dbReference type="NCBI Taxonomy" id="203124"/>
    <lineage>
        <taxon>Bacteria</taxon>
        <taxon>Bacillati</taxon>
        <taxon>Cyanobacteriota</taxon>
        <taxon>Cyanophyceae</taxon>
        <taxon>Oscillatoriophycideae</taxon>
        <taxon>Oscillatoriales</taxon>
        <taxon>Microcoleaceae</taxon>
        <taxon>Trichodesmium</taxon>
    </lineage>
</organism>
<sequence>MAETYLLDKLKSVEQTYNELTLRLADPDVAKDPSEFQKLAKARSSLEEVVNCYVEWKNAQEELADAKEILKEAVGDLEMQEMAKVEVEDLEAKLESLENQMKIALLPRDPNDDKNIMLEIRAGTGGDEASIWAGDLVRMYSRYSENQSWKVSLLSESLADMGGFKEAILEIKGDHVYSKLKFEAGVHRVQRVPVTEAGGRVHTSTATVAIMPEVDDVEVEIDQKDIELSTARSGGAGGQNVNKVETAVDLFHKPTGIRIFCTQERSQLQNRERAMQILRAKLYEIKLQEQQAEVSSIRRSQVGTGSRSEKIRTYNYKDNRVTDHRLNQNFSLVPLLEGDIENVIQACITQDQQERLQELAASSSTPISV</sequence>
<gene>
    <name evidence="1" type="primary">prfA</name>
    <name type="ordered locus">Tery_2982</name>
</gene>
<name>RF1_TRIEI</name>